<reference key="1">
    <citation type="submission" date="1999-08" db="EMBL/GenBank/DDBJ databases">
        <authorList>
            <person name="Paletzki R.F."/>
            <person name="Gerfen C.R."/>
        </authorList>
    </citation>
    <scope>NUCLEOTIDE SEQUENCE [MRNA]</scope>
    <source>
        <strain>C57BL/6J</strain>
    </source>
</reference>
<reference key="2">
    <citation type="journal article" date="1999" name="J. Biol. Chem.">
        <title>Cloning and characterization of human guanine deaminase. Purification and partial amino acid sequence of the mouse protein.</title>
        <authorList>
            <person name="Yuan G."/>
            <person name="Bin J.C."/>
            <person name="McKay D.J."/>
            <person name="Snyder F.F."/>
        </authorList>
    </citation>
    <scope>PARTIAL PROTEIN SEQUENCE</scope>
    <scope>FUNCTION</scope>
    <scope>CATALYTIC ACTIVITY</scope>
    <scope>BIOPHYSICOCHEMICAL PROPERTIES</scope>
    <source>
        <strain>C57BL/6J</strain>
        <tissue>Erythrocyte</tissue>
    </source>
</reference>
<reference key="3">
    <citation type="journal article" date="2010" name="Cell">
        <title>A tissue-specific atlas of mouse protein phosphorylation and expression.</title>
        <authorList>
            <person name="Huttlin E.L."/>
            <person name="Jedrychowski M.P."/>
            <person name="Elias J.E."/>
            <person name="Goswami T."/>
            <person name="Rad R."/>
            <person name="Beausoleil S.A."/>
            <person name="Villen J."/>
            <person name="Haas W."/>
            <person name="Sowa M.E."/>
            <person name="Gygi S.P."/>
        </authorList>
    </citation>
    <scope>IDENTIFICATION BY MASS SPECTROMETRY [LARGE SCALE ANALYSIS]</scope>
    <source>
        <tissue>Brain</tissue>
        <tissue>Brown adipose tissue</tissue>
        <tissue>Heart</tissue>
        <tissue>Liver</tissue>
        <tissue>Lung</tissue>
        <tissue>Pancreas</tissue>
        <tissue>Spleen</tissue>
    </source>
</reference>
<protein>
    <recommendedName>
        <fullName>Guanine deaminase</fullName>
        <shortName>Guanase</shortName>
        <shortName>Guanine aminase</shortName>
        <ecNumber evidence="5">3.5.4.3</ecNumber>
    </recommendedName>
    <alternativeName>
        <fullName>Guanine aminohydrolase</fullName>
        <shortName>GAH</shortName>
    </alternativeName>
</protein>
<name>GUAD_MOUSE</name>
<keyword id="KW-0903">Direct protein sequencing</keyword>
<keyword id="KW-0378">Hydrolase</keyword>
<keyword id="KW-0479">Metal-binding</keyword>
<keyword id="KW-0597">Phosphoprotein</keyword>
<keyword id="KW-1185">Reference proteome</keyword>
<keyword id="KW-0862">Zinc</keyword>
<comment type="function">
    <text evidence="3">Catalyzes the hydrolytic deamination of guanine, producing xanthine and ammonia.</text>
</comment>
<comment type="catalytic activity">
    <reaction evidence="5">
        <text>guanine + H2O + H(+) = xanthine + NH4(+)</text>
        <dbReference type="Rhea" id="RHEA:14665"/>
        <dbReference type="ChEBI" id="CHEBI:15377"/>
        <dbReference type="ChEBI" id="CHEBI:15378"/>
        <dbReference type="ChEBI" id="CHEBI:16235"/>
        <dbReference type="ChEBI" id="CHEBI:17712"/>
        <dbReference type="ChEBI" id="CHEBI:28938"/>
        <dbReference type="EC" id="3.5.4.3"/>
    </reaction>
    <physiologicalReaction direction="left-to-right" evidence="5">
        <dbReference type="Rhea" id="RHEA:14666"/>
    </physiologicalReaction>
</comment>
<comment type="cofactor">
    <cofactor evidence="2">
        <name>Zn(2+)</name>
        <dbReference type="ChEBI" id="CHEBI:29105"/>
    </cofactor>
    <text evidence="2">Binds 1 zinc ion per subunit.</text>
</comment>
<comment type="biophysicochemical properties">
    <kinetics>
        <KM evidence="3">22.7 uM for guanine</KM>
    </kinetics>
</comment>
<comment type="pathway">
    <text evidence="3">Purine metabolism; guanine degradation; xanthine from guanine: step 1/1.</text>
</comment>
<comment type="subunit">
    <text evidence="2">Homodimer.</text>
</comment>
<comment type="interaction">
    <interactant intactId="EBI-2308876">
        <id>Q9R111</id>
    </interactant>
    <interactant intactId="EBI-300895">
        <id>Q62108</id>
        <label>Dlg4</label>
    </interactant>
    <organismsDiffer>false</organismsDiffer>
    <experiments>6</experiments>
</comment>
<comment type="similarity">
    <text evidence="4">Belongs to the metallo-dependent hydrolases superfamily. ATZ/TRZ family.</text>
</comment>
<accession>Q9R111</accession>
<organism>
    <name type="scientific">Mus musculus</name>
    <name type="common">Mouse</name>
    <dbReference type="NCBI Taxonomy" id="10090"/>
    <lineage>
        <taxon>Eukaryota</taxon>
        <taxon>Metazoa</taxon>
        <taxon>Chordata</taxon>
        <taxon>Craniata</taxon>
        <taxon>Vertebrata</taxon>
        <taxon>Euteleostomi</taxon>
        <taxon>Mammalia</taxon>
        <taxon>Eutheria</taxon>
        <taxon>Euarchontoglires</taxon>
        <taxon>Glires</taxon>
        <taxon>Rodentia</taxon>
        <taxon>Myomorpha</taxon>
        <taxon>Muroidea</taxon>
        <taxon>Muridae</taxon>
        <taxon>Murinae</taxon>
        <taxon>Mus</taxon>
        <taxon>Mus</taxon>
    </lineage>
</organism>
<sequence>MCAARTPPLALVFRGTFVHSTWTCPMEVLRDHLLGVSDSGKIVFLEESSQQEKLAKEWCFKPCEIRELSHHEFFMPGLVDTHIHAPQYAFAGSNVDLPLLEWLNKYTFPTEQRFRSTDVAEEVYTRVVRRTLKNGTTTACYFGTIHTDSSLILAEITDKFGQRAFVGKVCMDLNDTVPEYKETTEESVKETERFVSEMLQKNYPRVKPIVTPRFTLSCTETLMSELGNIAKTHDLYIQSHISENREEIEAVKSLYPSYKNYTDVYDKNNLLTNKTVMAHGCYLSEEELNIFSERGASIAHCPNSNLSLSSGLLNVLEVLKHKVKIGLGTDVAGGYSYSMLDAIRRAVMVSNVLLINKVNEKNLTLKEVFRLATLGGSQALGLDSEIGNFEVGKEFDALLINPRASDSPIDLFYGDFVGDISEAVIQKFLYLGDDRNIEEVYVGGKQVVPFSSSV</sequence>
<gene>
    <name evidence="6" type="primary">Gda</name>
</gene>
<feature type="chain" id="PRO_0000122299" description="Guanine deaminase">
    <location>
        <begin position="1"/>
        <end position="454"/>
    </location>
</feature>
<feature type="binding site" evidence="2">
    <location>
        <position position="82"/>
    </location>
    <ligand>
        <name>Zn(2+)</name>
        <dbReference type="ChEBI" id="CHEBI:29105"/>
    </ligand>
</feature>
<feature type="binding site" evidence="2">
    <location>
        <begin position="84"/>
        <end position="87"/>
    </location>
    <ligand>
        <name>substrate</name>
    </ligand>
</feature>
<feature type="binding site" evidence="2">
    <location>
        <position position="84"/>
    </location>
    <ligand>
        <name>Zn(2+)</name>
        <dbReference type="ChEBI" id="CHEBI:29105"/>
    </ligand>
</feature>
<feature type="binding site" evidence="2">
    <location>
        <begin position="213"/>
        <end position="214"/>
    </location>
    <ligand>
        <name>substrate</name>
    </ligand>
</feature>
<feature type="binding site" evidence="2">
    <location>
        <begin position="240"/>
        <end position="243"/>
    </location>
    <ligand>
        <name>substrate</name>
    </ligand>
</feature>
<feature type="binding site" evidence="2">
    <location>
        <position position="240"/>
    </location>
    <ligand>
        <name>Zn(2+)</name>
        <dbReference type="ChEBI" id="CHEBI:29105"/>
    </ligand>
</feature>
<feature type="binding site" evidence="2">
    <location>
        <position position="330"/>
    </location>
    <ligand>
        <name>substrate</name>
    </ligand>
</feature>
<feature type="binding site" evidence="2">
    <location>
        <position position="330"/>
    </location>
    <ligand>
        <name>Zn(2+)</name>
        <dbReference type="ChEBI" id="CHEBI:29105"/>
    </ligand>
</feature>
<feature type="modified residue" description="Phosphoserine" evidence="1">
    <location>
        <position position="453"/>
    </location>
</feature>
<proteinExistence type="evidence at protein level"/>
<evidence type="ECO:0000250" key="1">
    <source>
        <dbReference type="UniProtKB" id="Q9WTT6"/>
    </source>
</evidence>
<evidence type="ECO:0000250" key="2">
    <source>
        <dbReference type="UniProtKB" id="Q9Y2T3"/>
    </source>
</evidence>
<evidence type="ECO:0000269" key="3">
    <source>
    </source>
</evidence>
<evidence type="ECO:0000305" key="4"/>
<evidence type="ECO:0000305" key="5">
    <source>
    </source>
</evidence>
<evidence type="ECO:0000312" key="6">
    <source>
        <dbReference type="MGI" id="MGI:95678"/>
    </source>
</evidence>
<dbReference type="EC" id="3.5.4.3" evidence="5"/>
<dbReference type="EMBL" id="AF174583">
    <property type="protein sequence ID" value="AAD50297.1"/>
    <property type="molecule type" value="mRNA"/>
</dbReference>
<dbReference type="CCDS" id="CCDS29698.1"/>
<dbReference type="RefSeq" id="NP_034396.1">
    <property type="nucleotide sequence ID" value="NM_010266.2"/>
</dbReference>
<dbReference type="SMR" id="Q9R111"/>
<dbReference type="BioGRID" id="199872">
    <property type="interactions" value="22"/>
</dbReference>
<dbReference type="FunCoup" id="Q9R111">
    <property type="interactions" value="707"/>
</dbReference>
<dbReference type="IntAct" id="Q9R111">
    <property type="interactions" value="3"/>
</dbReference>
<dbReference type="MINT" id="Q9R111"/>
<dbReference type="STRING" id="10090.ENSMUSP00000084882"/>
<dbReference type="MEROPS" id="M38.981"/>
<dbReference type="GlyGen" id="Q9R111">
    <property type="glycosylation" value="3 sites, 1 N-linked glycan (1 site), 1 O-linked glycan (2 sites)"/>
</dbReference>
<dbReference type="iPTMnet" id="Q9R111"/>
<dbReference type="MetOSite" id="Q9R111"/>
<dbReference type="PhosphoSitePlus" id="Q9R111"/>
<dbReference type="SwissPalm" id="Q9R111"/>
<dbReference type="REPRODUCTION-2DPAGE" id="IPI00469987"/>
<dbReference type="REPRODUCTION-2DPAGE" id="Q9R111"/>
<dbReference type="jPOST" id="Q9R111"/>
<dbReference type="PaxDb" id="10090-ENSMUSP00000084882"/>
<dbReference type="ProteomicsDB" id="271489"/>
<dbReference type="Pumba" id="Q9R111"/>
<dbReference type="Antibodypedia" id="12519">
    <property type="antibodies" value="263 antibodies from 24 providers"/>
</dbReference>
<dbReference type="DNASU" id="14544"/>
<dbReference type="Ensembl" id="ENSMUST00000087600.10">
    <property type="protein sequence ID" value="ENSMUSP00000084882.4"/>
    <property type="gene ID" value="ENSMUSG00000058624.14"/>
</dbReference>
<dbReference type="GeneID" id="14544"/>
<dbReference type="KEGG" id="mmu:14544"/>
<dbReference type="UCSC" id="uc008gyx.1">
    <property type="organism name" value="mouse"/>
</dbReference>
<dbReference type="AGR" id="MGI:95678"/>
<dbReference type="CTD" id="9615"/>
<dbReference type="MGI" id="MGI:95678">
    <property type="gene designation" value="Gda"/>
</dbReference>
<dbReference type="VEuPathDB" id="HostDB:ENSMUSG00000058624"/>
<dbReference type="eggNOG" id="KOG3968">
    <property type="taxonomic scope" value="Eukaryota"/>
</dbReference>
<dbReference type="GeneTree" id="ENSGT00390000017130"/>
<dbReference type="InParanoid" id="Q9R111"/>
<dbReference type="OMA" id="CVHMNDS"/>
<dbReference type="OrthoDB" id="194468at2759"/>
<dbReference type="PhylomeDB" id="Q9R111"/>
<dbReference type="TreeFam" id="TF324539"/>
<dbReference type="Reactome" id="R-MMU-74259">
    <property type="pathway name" value="Purine catabolism"/>
</dbReference>
<dbReference type="SABIO-RK" id="Q9R111"/>
<dbReference type="UniPathway" id="UPA00603">
    <property type="reaction ID" value="UER00660"/>
</dbReference>
<dbReference type="BioGRID-ORCS" id="14544">
    <property type="hits" value="3 hits in 77 CRISPR screens"/>
</dbReference>
<dbReference type="ChiTaRS" id="Gda">
    <property type="organism name" value="mouse"/>
</dbReference>
<dbReference type="PRO" id="PR:Q9R111"/>
<dbReference type="Proteomes" id="UP000000589">
    <property type="component" value="Chromosome 19"/>
</dbReference>
<dbReference type="RNAct" id="Q9R111">
    <property type="molecule type" value="protein"/>
</dbReference>
<dbReference type="Bgee" id="ENSMUSG00000058624">
    <property type="expression patterns" value="Expressed in epithelium of small intestine and 176 other cell types or tissues"/>
</dbReference>
<dbReference type="ExpressionAtlas" id="Q9R111">
    <property type="expression patterns" value="baseline and differential"/>
</dbReference>
<dbReference type="GO" id="GO:0005829">
    <property type="term" value="C:cytosol"/>
    <property type="evidence" value="ECO:0000314"/>
    <property type="project" value="MGI"/>
</dbReference>
<dbReference type="GO" id="GO:0008892">
    <property type="term" value="F:guanine deaminase activity"/>
    <property type="evidence" value="ECO:0000314"/>
    <property type="project" value="MGI"/>
</dbReference>
<dbReference type="GO" id="GO:0008270">
    <property type="term" value="F:zinc ion binding"/>
    <property type="evidence" value="ECO:0007669"/>
    <property type="project" value="InterPro"/>
</dbReference>
<dbReference type="GO" id="GO:0000255">
    <property type="term" value="P:allantoin metabolic process"/>
    <property type="evidence" value="ECO:0000314"/>
    <property type="project" value="MGI"/>
</dbReference>
<dbReference type="GO" id="GO:0043605">
    <property type="term" value="P:amide catabolic process"/>
    <property type="evidence" value="ECO:0000314"/>
    <property type="project" value="MGI"/>
</dbReference>
<dbReference type="GO" id="GO:0006161">
    <property type="term" value="P:deoxyguanosine catabolic process"/>
    <property type="evidence" value="ECO:0000314"/>
    <property type="project" value="MGI"/>
</dbReference>
<dbReference type="GO" id="GO:0046055">
    <property type="term" value="P:dGMP catabolic process"/>
    <property type="evidence" value="ECO:0000314"/>
    <property type="project" value="MGI"/>
</dbReference>
<dbReference type="GO" id="GO:0046038">
    <property type="term" value="P:GMP catabolic process"/>
    <property type="evidence" value="ECO:0000314"/>
    <property type="project" value="MGI"/>
</dbReference>
<dbReference type="GO" id="GO:0006147">
    <property type="term" value="P:guanine catabolic process"/>
    <property type="evidence" value="ECO:0000314"/>
    <property type="project" value="MGI"/>
</dbReference>
<dbReference type="CDD" id="cd01303">
    <property type="entry name" value="GDEase"/>
    <property type="match status" value="1"/>
</dbReference>
<dbReference type="FunFam" id="3.20.20.140:FF:000021">
    <property type="entry name" value="Guanine deaminase"/>
    <property type="match status" value="1"/>
</dbReference>
<dbReference type="Gene3D" id="3.20.20.140">
    <property type="entry name" value="Metal-dependent hydrolases"/>
    <property type="match status" value="1"/>
</dbReference>
<dbReference type="Gene3D" id="2.30.40.10">
    <property type="entry name" value="Urease, subunit C, domain 1"/>
    <property type="match status" value="1"/>
</dbReference>
<dbReference type="InterPro" id="IPR006680">
    <property type="entry name" value="Amidohydro-rel"/>
</dbReference>
<dbReference type="InterPro" id="IPR014311">
    <property type="entry name" value="Guanine_deaminase"/>
</dbReference>
<dbReference type="InterPro" id="IPR011059">
    <property type="entry name" value="Metal-dep_hydrolase_composite"/>
</dbReference>
<dbReference type="InterPro" id="IPR032466">
    <property type="entry name" value="Metal_Hydrolase"/>
</dbReference>
<dbReference type="InterPro" id="IPR051607">
    <property type="entry name" value="Metallo-dep_hydrolases"/>
</dbReference>
<dbReference type="NCBIfam" id="TIGR02967">
    <property type="entry name" value="guan_deamin"/>
    <property type="match status" value="1"/>
</dbReference>
<dbReference type="PANTHER" id="PTHR11271">
    <property type="entry name" value="GUANINE DEAMINASE"/>
    <property type="match status" value="1"/>
</dbReference>
<dbReference type="PANTHER" id="PTHR11271:SF6">
    <property type="entry name" value="GUANINE DEAMINASE"/>
    <property type="match status" value="1"/>
</dbReference>
<dbReference type="Pfam" id="PF01979">
    <property type="entry name" value="Amidohydro_1"/>
    <property type="match status" value="1"/>
</dbReference>
<dbReference type="SUPFAM" id="SSF51338">
    <property type="entry name" value="Composite domain of metallo-dependent hydrolases"/>
    <property type="match status" value="1"/>
</dbReference>
<dbReference type="SUPFAM" id="SSF51556">
    <property type="entry name" value="Metallo-dependent hydrolases"/>
    <property type="match status" value="1"/>
</dbReference>